<proteinExistence type="inferred from homology"/>
<organism>
    <name type="scientific">Sorex asper</name>
    <name type="common">Tien Shan shrew</name>
    <dbReference type="NCBI Taxonomy" id="62897"/>
    <lineage>
        <taxon>Eukaryota</taxon>
        <taxon>Metazoa</taxon>
        <taxon>Chordata</taxon>
        <taxon>Craniata</taxon>
        <taxon>Vertebrata</taxon>
        <taxon>Euteleostomi</taxon>
        <taxon>Mammalia</taxon>
        <taxon>Eutheria</taxon>
        <taxon>Laurasiatheria</taxon>
        <taxon>Eulipotyphla</taxon>
        <taxon>Soricidae</taxon>
        <taxon>Soricinae</taxon>
        <taxon>Sorex</taxon>
    </lineage>
</organism>
<gene>
    <name type="primary">MT-CYB</name>
    <name type="synonym">COB</name>
    <name type="synonym">CYTB</name>
    <name type="synonym">MTCYB</name>
</gene>
<dbReference type="EMBL" id="AJ000425">
    <property type="protein sequence ID" value="CAA04070.1"/>
    <property type="molecule type" value="Genomic_DNA"/>
</dbReference>
<dbReference type="EMBL" id="AJ000426">
    <property type="protein sequence ID" value="CAA04071.1"/>
    <property type="molecule type" value="Genomic_DNA"/>
</dbReference>
<dbReference type="SMR" id="O79980"/>
<dbReference type="GO" id="GO:0005743">
    <property type="term" value="C:mitochondrial inner membrane"/>
    <property type="evidence" value="ECO:0007669"/>
    <property type="project" value="UniProtKB-SubCell"/>
</dbReference>
<dbReference type="GO" id="GO:0045275">
    <property type="term" value="C:respiratory chain complex III"/>
    <property type="evidence" value="ECO:0007669"/>
    <property type="project" value="InterPro"/>
</dbReference>
<dbReference type="GO" id="GO:0046872">
    <property type="term" value="F:metal ion binding"/>
    <property type="evidence" value="ECO:0007669"/>
    <property type="project" value="UniProtKB-KW"/>
</dbReference>
<dbReference type="GO" id="GO:0008121">
    <property type="term" value="F:ubiquinol-cytochrome-c reductase activity"/>
    <property type="evidence" value="ECO:0007669"/>
    <property type="project" value="InterPro"/>
</dbReference>
<dbReference type="GO" id="GO:0006122">
    <property type="term" value="P:mitochondrial electron transport, ubiquinol to cytochrome c"/>
    <property type="evidence" value="ECO:0007669"/>
    <property type="project" value="TreeGrafter"/>
</dbReference>
<dbReference type="CDD" id="cd00290">
    <property type="entry name" value="cytochrome_b_C"/>
    <property type="match status" value="1"/>
</dbReference>
<dbReference type="CDD" id="cd00284">
    <property type="entry name" value="Cytochrome_b_N"/>
    <property type="match status" value="1"/>
</dbReference>
<dbReference type="FunFam" id="1.20.810.10:FF:000002">
    <property type="entry name" value="Cytochrome b"/>
    <property type="match status" value="1"/>
</dbReference>
<dbReference type="Gene3D" id="1.20.810.10">
    <property type="entry name" value="Cytochrome Bc1 Complex, Chain C"/>
    <property type="match status" value="1"/>
</dbReference>
<dbReference type="InterPro" id="IPR005798">
    <property type="entry name" value="Cyt_b/b6_C"/>
</dbReference>
<dbReference type="InterPro" id="IPR036150">
    <property type="entry name" value="Cyt_b/b6_C_sf"/>
</dbReference>
<dbReference type="InterPro" id="IPR005797">
    <property type="entry name" value="Cyt_b/b6_N"/>
</dbReference>
<dbReference type="InterPro" id="IPR027387">
    <property type="entry name" value="Cytb/b6-like_sf"/>
</dbReference>
<dbReference type="InterPro" id="IPR030689">
    <property type="entry name" value="Cytochrome_b"/>
</dbReference>
<dbReference type="InterPro" id="IPR048260">
    <property type="entry name" value="Cytochrome_b_C_euk/bac"/>
</dbReference>
<dbReference type="InterPro" id="IPR048259">
    <property type="entry name" value="Cytochrome_b_N_euk/bac"/>
</dbReference>
<dbReference type="InterPro" id="IPR016174">
    <property type="entry name" value="Di-haem_cyt_TM"/>
</dbReference>
<dbReference type="PANTHER" id="PTHR19271">
    <property type="entry name" value="CYTOCHROME B"/>
    <property type="match status" value="1"/>
</dbReference>
<dbReference type="PANTHER" id="PTHR19271:SF16">
    <property type="entry name" value="CYTOCHROME B"/>
    <property type="match status" value="1"/>
</dbReference>
<dbReference type="Pfam" id="PF00032">
    <property type="entry name" value="Cytochrom_B_C"/>
    <property type="match status" value="1"/>
</dbReference>
<dbReference type="Pfam" id="PF00033">
    <property type="entry name" value="Cytochrome_B"/>
    <property type="match status" value="1"/>
</dbReference>
<dbReference type="PIRSF" id="PIRSF038885">
    <property type="entry name" value="COB"/>
    <property type="match status" value="1"/>
</dbReference>
<dbReference type="SUPFAM" id="SSF81648">
    <property type="entry name" value="a domain/subunit of cytochrome bc1 complex (Ubiquinol-cytochrome c reductase)"/>
    <property type="match status" value="1"/>
</dbReference>
<dbReference type="SUPFAM" id="SSF81342">
    <property type="entry name" value="Transmembrane di-heme cytochromes"/>
    <property type="match status" value="1"/>
</dbReference>
<dbReference type="PROSITE" id="PS51003">
    <property type="entry name" value="CYTB_CTER"/>
    <property type="match status" value="1"/>
</dbReference>
<dbReference type="PROSITE" id="PS51002">
    <property type="entry name" value="CYTB_NTER"/>
    <property type="match status" value="1"/>
</dbReference>
<name>CYB_SORAS</name>
<comment type="function">
    <text evidence="2">Component of the ubiquinol-cytochrome c reductase complex (complex III or cytochrome b-c1 complex) that is part of the mitochondrial respiratory chain. The b-c1 complex mediates electron transfer from ubiquinol to cytochrome c. Contributes to the generation of a proton gradient across the mitochondrial membrane that is then used for ATP synthesis.</text>
</comment>
<comment type="cofactor">
    <cofactor evidence="2">
        <name>heme b</name>
        <dbReference type="ChEBI" id="CHEBI:60344"/>
    </cofactor>
    <text evidence="2">Binds 2 heme b groups non-covalently.</text>
</comment>
<comment type="subunit">
    <text evidence="2">The cytochrome bc1 complex contains 11 subunits: 3 respiratory subunits (MT-CYB, CYC1 and UQCRFS1), 2 core proteins (UQCRC1 and UQCRC2) and 6 low-molecular weight proteins (UQCRH/QCR6, UQCRB/QCR7, UQCRQ/QCR8, UQCR10/QCR9, UQCR11/QCR10 and a cleavage product of UQCRFS1). This cytochrome bc1 complex then forms a dimer.</text>
</comment>
<comment type="subcellular location">
    <subcellularLocation>
        <location evidence="2">Mitochondrion inner membrane</location>
        <topology evidence="2">Multi-pass membrane protein</topology>
    </subcellularLocation>
</comment>
<comment type="miscellaneous">
    <text evidence="1">Heme 1 (or BL or b562) is low-potential and absorbs at about 562 nm, and heme 2 (or BH or b566) is high-potential and absorbs at about 566 nm.</text>
</comment>
<comment type="similarity">
    <text evidence="3 4">Belongs to the cytochrome b family.</text>
</comment>
<comment type="caution">
    <text evidence="2">The full-length protein contains only eight transmembrane helices, not nine as predicted by bioinformatics tools.</text>
</comment>
<protein>
    <recommendedName>
        <fullName>Cytochrome b</fullName>
    </recommendedName>
    <alternativeName>
        <fullName>Complex III subunit 3</fullName>
    </alternativeName>
    <alternativeName>
        <fullName>Complex III subunit III</fullName>
    </alternativeName>
    <alternativeName>
        <fullName>Cytochrome b-c1 complex subunit 3</fullName>
    </alternativeName>
    <alternativeName>
        <fullName>Ubiquinol-cytochrome-c reductase complex cytochrome b subunit</fullName>
    </alternativeName>
</protein>
<keyword id="KW-0249">Electron transport</keyword>
<keyword id="KW-0349">Heme</keyword>
<keyword id="KW-0408">Iron</keyword>
<keyword id="KW-0472">Membrane</keyword>
<keyword id="KW-0479">Metal-binding</keyword>
<keyword id="KW-0496">Mitochondrion</keyword>
<keyword id="KW-0999">Mitochondrion inner membrane</keyword>
<keyword id="KW-0679">Respiratory chain</keyword>
<keyword id="KW-0812">Transmembrane</keyword>
<keyword id="KW-1133">Transmembrane helix</keyword>
<keyword id="KW-0813">Transport</keyword>
<keyword id="KW-0830">Ubiquinone</keyword>
<geneLocation type="mitochondrion"/>
<evidence type="ECO:0000250" key="1"/>
<evidence type="ECO:0000250" key="2">
    <source>
        <dbReference type="UniProtKB" id="P00157"/>
    </source>
</evidence>
<evidence type="ECO:0000255" key="3">
    <source>
        <dbReference type="PROSITE-ProRule" id="PRU00967"/>
    </source>
</evidence>
<evidence type="ECO:0000255" key="4">
    <source>
        <dbReference type="PROSITE-ProRule" id="PRU00968"/>
    </source>
</evidence>
<reference key="1">
    <citation type="journal article" date="1999" name="Mol. Phylogenet. Evol.">
        <title>Molecular phylogeny and evolution of Sorex shrews (Soricidae: Insectivora) inferred from mitochondrial DNA sequence data.</title>
        <authorList>
            <person name="Fumagalli L."/>
            <person name="Taberlet P."/>
            <person name="Stewart D.T."/>
            <person name="Gielly L."/>
            <person name="Hausser J."/>
            <person name="Vogel P."/>
        </authorList>
    </citation>
    <scope>NUCLEOTIDE SEQUENCE [GENOMIC DNA]</scope>
</reference>
<sequence>QILTGLFLAMHYTSDTMTAFSSVTHICRDVNYGWLIRYLHANGASMFFICLFLHVGRGLYYGSYMYLETWNIGVLLLFAVMATAFMGYVLPWGQMSFWGATVITNLLSAIPYIGSDLVEWIWGGFSVDKATLTRFFAFHFILPFIIAALAGVHLLFLHETGSNNPSGLSSDADKIPFHPYYTIKDILGVLLLILVLTSLVLFSPDLLGDPDNYTPANPLNTPPHIKPEWYFLFAYAILRSIPNKLGGVLALVLSILILAVVPFLHTSKQRSMMFRPFSQCLFWILVADLLTLTWIGGQPVEHPFIIIGQLASILYFLLILVIMPITSLFENNLLKW</sequence>
<accession>O79980</accession>
<feature type="chain" id="PRO_0000061551" description="Cytochrome b">
    <location>
        <begin position="1" status="less than"/>
        <end position="336" status="greater than"/>
    </location>
</feature>
<feature type="transmembrane region" description="Helical" evidence="2">
    <location>
        <begin position="1" status="less than"/>
        <end position="10"/>
    </location>
</feature>
<feature type="transmembrane region" description="Helical" evidence="2">
    <location>
        <begin position="34"/>
        <end position="55"/>
    </location>
</feature>
<feature type="transmembrane region" description="Helical" evidence="2">
    <location>
        <begin position="70"/>
        <end position="90"/>
    </location>
</feature>
<feature type="transmembrane region" description="Helical" evidence="2">
    <location>
        <begin position="135"/>
        <end position="155"/>
    </location>
</feature>
<feature type="transmembrane region" description="Helical" evidence="2">
    <location>
        <begin position="183"/>
        <end position="203"/>
    </location>
</feature>
<feature type="transmembrane region" description="Helical" evidence="2">
    <location>
        <begin position="245"/>
        <end position="265"/>
    </location>
</feature>
<feature type="transmembrane region" description="Helical" evidence="2">
    <location>
        <begin position="277"/>
        <end position="297"/>
    </location>
</feature>
<feature type="transmembrane region" description="Helical" evidence="2">
    <location>
        <begin position="304"/>
        <end position="324"/>
    </location>
</feature>
<feature type="binding site" description="axial binding residue" evidence="2">
    <location>
        <position position="40"/>
    </location>
    <ligand>
        <name>heme b</name>
        <dbReference type="ChEBI" id="CHEBI:60344"/>
        <label>b562</label>
    </ligand>
    <ligandPart>
        <name>Fe</name>
        <dbReference type="ChEBI" id="CHEBI:18248"/>
    </ligandPart>
</feature>
<feature type="binding site" description="axial binding residue" evidence="2">
    <location>
        <position position="54"/>
    </location>
    <ligand>
        <name>heme b</name>
        <dbReference type="ChEBI" id="CHEBI:60344"/>
        <label>b566</label>
    </ligand>
    <ligandPart>
        <name>Fe</name>
        <dbReference type="ChEBI" id="CHEBI:18248"/>
    </ligandPart>
</feature>
<feature type="binding site" description="axial binding residue" evidence="2">
    <location>
        <position position="139"/>
    </location>
    <ligand>
        <name>heme b</name>
        <dbReference type="ChEBI" id="CHEBI:60344"/>
        <label>b562</label>
    </ligand>
    <ligandPart>
        <name>Fe</name>
        <dbReference type="ChEBI" id="CHEBI:18248"/>
    </ligandPart>
</feature>
<feature type="binding site" description="axial binding residue" evidence="2">
    <location>
        <position position="153"/>
    </location>
    <ligand>
        <name>heme b</name>
        <dbReference type="ChEBI" id="CHEBI:60344"/>
        <label>b566</label>
    </ligand>
    <ligandPart>
        <name>Fe</name>
        <dbReference type="ChEBI" id="CHEBI:18248"/>
    </ligandPart>
</feature>
<feature type="binding site" evidence="2">
    <location>
        <position position="158"/>
    </location>
    <ligand>
        <name>a ubiquinone</name>
        <dbReference type="ChEBI" id="CHEBI:16389"/>
    </ligand>
</feature>
<feature type="non-terminal residue">
    <location>
        <position position="1"/>
    </location>
</feature>
<feature type="non-terminal residue">
    <location>
        <position position="336"/>
    </location>
</feature>